<name>GET1_CANAL</name>
<comment type="function">
    <text evidence="1">Required for the post-translational delivery of tail-anchored (TA) proteins to the endoplasmic reticulum. Together with GET2, acts as a membrane receptor for soluble GET3, which recognizes and selectively binds the transmembrane domain of TA proteins in the cytosol. The GET complex cooperates with the HDEL receptor ERD2 to mediate the ATP-dependent retrieval of resident ER proteins that contain a C-terminal H-D-E-L retention signal from the Golgi to the ER.</text>
</comment>
<comment type="subunit">
    <text evidence="1">Component of the Golgi to ER traffic (GET) complex, which is composed of GET1, GET2 and GET3. Within the complex, GET1 and GET2 form a heterotetramer which is stabilized by phosphatidylinositol binding and which binds to the GET3 homodimer.</text>
</comment>
<comment type="subcellular location">
    <subcellularLocation>
        <location evidence="1">Endoplasmic reticulum membrane</location>
        <topology evidence="1">Multi-pass membrane protein</topology>
    </subcellularLocation>
    <subcellularLocation>
        <location evidence="1">Golgi apparatus membrane</location>
        <topology evidence="1">Multi-pass membrane protein</topology>
    </subcellularLocation>
</comment>
<comment type="similarity">
    <text evidence="1">Belongs to the WRB/GET1 family.</text>
</comment>
<dbReference type="EMBL" id="CP017624">
    <property type="protein sequence ID" value="AOW27086.1"/>
    <property type="molecule type" value="Genomic_DNA"/>
</dbReference>
<dbReference type="RefSeq" id="XP_719547.1">
    <property type="nucleotide sequence ID" value="XM_714454.1"/>
</dbReference>
<dbReference type="SMR" id="Q5ACW6"/>
<dbReference type="FunCoup" id="Q5ACW6">
    <property type="interactions" value="42"/>
</dbReference>
<dbReference type="STRING" id="237561.Q5ACW6"/>
<dbReference type="EnsemblFungi" id="C2_00320W_A-T">
    <property type="protein sequence ID" value="C2_00320W_A-T-p1"/>
    <property type="gene ID" value="C2_00320W_A"/>
</dbReference>
<dbReference type="GeneID" id="3638798"/>
<dbReference type="KEGG" id="cal:CAALFM_C200320WA"/>
<dbReference type="CGD" id="CAL0000180884">
    <property type="gene designation" value="orf19.9649"/>
</dbReference>
<dbReference type="VEuPathDB" id="FungiDB:C2_00320W_A"/>
<dbReference type="eggNOG" id="KOG4253">
    <property type="taxonomic scope" value="Eukaryota"/>
</dbReference>
<dbReference type="HOGENOM" id="CLU_089418_2_0_1"/>
<dbReference type="InParanoid" id="Q5ACW6"/>
<dbReference type="OMA" id="AEWIISF"/>
<dbReference type="OrthoDB" id="69461at2759"/>
<dbReference type="PRO" id="PR:Q5ACW6"/>
<dbReference type="Proteomes" id="UP000000559">
    <property type="component" value="Chromosome 2"/>
</dbReference>
<dbReference type="GO" id="GO:0005789">
    <property type="term" value="C:endoplasmic reticulum membrane"/>
    <property type="evidence" value="ECO:0007669"/>
    <property type="project" value="UniProtKB-SubCell"/>
</dbReference>
<dbReference type="GO" id="GO:0043529">
    <property type="term" value="C:GET complex"/>
    <property type="evidence" value="ECO:0000318"/>
    <property type="project" value="GO_Central"/>
</dbReference>
<dbReference type="GO" id="GO:0000139">
    <property type="term" value="C:Golgi membrane"/>
    <property type="evidence" value="ECO:0007669"/>
    <property type="project" value="UniProtKB-SubCell"/>
</dbReference>
<dbReference type="GO" id="GO:0043495">
    <property type="term" value="F:protein-membrane adaptor activity"/>
    <property type="evidence" value="ECO:0000318"/>
    <property type="project" value="GO_Central"/>
</dbReference>
<dbReference type="GO" id="GO:0071816">
    <property type="term" value="P:tail-anchored membrane protein insertion into ER membrane"/>
    <property type="evidence" value="ECO:0000318"/>
    <property type="project" value="GO_Central"/>
</dbReference>
<dbReference type="GO" id="GO:0016192">
    <property type="term" value="P:vesicle-mediated transport"/>
    <property type="evidence" value="ECO:0007669"/>
    <property type="project" value="UniProtKB-KW"/>
</dbReference>
<dbReference type="FunFam" id="1.10.287.660:FF:000006">
    <property type="entry name" value="Protein GET1"/>
    <property type="match status" value="1"/>
</dbReference>
<dbReference type="Gene3D" id="1.10.287.660">
    <property type="entry name" value="Helix hairpin bin"/>
    <property type="match status" value="1"/>
</dbReference>
<dbReference type="HAMAP" id="MF_03113">
    <property type="entry name" value="Get1"/>
    <property type="match status" value="1"/>
</dbReference>
<dbReference type="InterPro" id="IPR028945">
    <property type="entry name" value="Get1"/>
</dbReference>
<dbReference type="InterPro" id="IPR027538">
    <property type="entry name" value="Get1_fungi"/>
</dbReference>
<dbReference type="InterPro" id="IPR029012">
    <property type="entry name" value="Helix_hairpin_bin_sf"/>
</dbReference>
<dbReference type="PANTHER" id="PTHR42650:SF1">
    <property type="entry name" value="GUIDED ENTRY OF TAIL-ANCHORED PROTEINS FACTOR 1"/>
    <property type="match status" value="1"/>
</dbReference>
<dbReference type="PANTHER" id="PTHR42650">
    <property type="entry name" value="TAIL-ANCHORED PROTEIN INSERTION RECEPTOR WRB"/>
    <property type="match status" value="1"/>
</dbReference>
<dbReference type="Pfam" id="PF04420">
    <property type="entry name" value="CHD5"/>
    <property type="match status" value="1"/>
</dbReference>
<reference key="1">
    <citation type="journal article" date="2004" name="Proc. Natl. Acad. Sci. U.S.A.">
        <title>The diploid genome sequence of Candida albicans.</title>
        <authorList>
            <person name="Jones T."/>
            <person name="Federspiel N.A."/>
            <person name="Chibana H."/>
            <person name="Dungan J."/>
            <person name="Kalman S."/>
            <person name="Magee B.B."/>
            <person name="Newport G."/>
            <person name="Thorstenson Y.R."/>
            <person name="Agabian N."/>
            <person name="Magee P.T."/>
            <person name="Davis R.W."/>
            <person name="Scherer S."/>
        </authorList>
    </citation>
    <scope>NUCLEOTIDE SEQUENCE [LARGE SCALE GENOMIC DNA]</scope>
    <source>
        <strain>SC5314 / ATCC MYA-2876</strain>
    </source>
</reference>
<reference key="2">
    <citation type="journal article" date="2007" name="Genome Biol.">
        <title>Assembly of the Candida albicans genome into sixteen supercontigs aligned on the eight chromosomes.</title>
        <authorList>
            <person name="van het Hoog M."/>
            <person name="Rast T.J."/>
            <person name="Martchenko M."/>
            <person name="Grindle S."/>
            <person name="Dignard D."/>
            <person name="Hogues H."/>
            <person name="Cuomo C."/>
            <person name="Berriman M."/>
            <person name="Scherer S."/>
            <person name="Magee B.B."/>
            <person name="Whiteway M."/>
            <person name="Chibana H."/>
            <person name="Nantel A."/>
            <person name="Magee P.T."/>
        </authorList>
    </citation>
    <scope>GENOME REANNOTATION</scope>
    <source>
        <strain>SC5314 / ATCC MYA-2876</strain>
    </source>
</reference>
<reference key="3">
    <citation type="journal article" date="2013" name="Genome Biol.">
        <title>Assembly of a phased diploid Candida albicans genome facilitates allele-specific measurements and provides a simple model for repeat and indel structure.</title>
        <authorList>
            <person name="Muzzey D."/>
            <person name="Schwartz K."/>
            <person name="Weissman J.S."/>
            <person name="Sherlock G."/>
        </authorList>
    </citation>
    <scope>NUCLEOTIDE SEQUENCE [LARGE SCALE GENOMIC DNA]</scope>
    <scope>GENOME REANNOTATION</scope>
    <source>
        <strain>SC5314 / ATCC MYA-2876</strain>
    </source>
</reference>
<evidence type="ECO:0000255" key="1">
    <source>
        <dbReference type="HAMAP-Rule" id="MF_03113"/>
    </source>
</evidence>
<sequence>MLLPDLHPYTILLSIFLVLVAKQLVATIGKSTIQEFVWLVYLKVSSNQSIKTYNSKQHELHETNRQKRAISAQDEYAKWTKLNRQADKLSAELQKLNQEIQQQKSSIDKASNALILVLTTLPIWIARVFYRKTHLFYIRQGIFPKYVEWVLALPFLPNGAVGLTIWMFAVNSVVSNFSFLVSFPFAKRVSKPVRDTKVE</sequence>
<organism>
    <name type="scientific">Candida albicans (strain SC5314 / ATCC MYA-2876)</name>
    <name type="common">Yeast</name>
    <dbReference type="NCBI Taxonomy" id="237561"/>
    <lineage>
        <taxon>Eukaryota</taxon>
        <taxon>Fungi</taxon>
        <taxon>Dikarya</taxon>
        <taxon>Ascomycota</taxon>
        <taxon>Saccharomycotina</taxon>
        <taxon>Pichiomycetes</taxon>
        <taxon>Debaryomycetaceae</taxon>
        <taxon>Candida/Lodderomyces clade</taxon>
        <taxon>Candida</taxon>
    </lineage>
</organism>
<accession>Q5ACW6</accession>
<accession>A0A1D8PG24</accession>
<gene>
    <name evidence="1" type="primary">GET1</name>
    <name type="ordered locus">CAALFM_C200320WA</name>
    <name type="ORF">CaO19.2101</name>
    <name type="ORF">CaO19.9649</name>
</gene>
<keyword id="KW-0175">Coiled coil</keyword>
<keyword id="KW-0256">Endoplasmic reticulum</keyword>
<keyword id="KW-0931">ER-Golgi transport</keyword>
<keyword id="KW-0333">Golgi apparatus</keyword>
<keyword id="KW-0472">Membrane</keyword>
<keyword id="KW-1185">Reference proteome</keyword>
<keyword id="KW-0812">Transmembrane</keyword>
<keyword id="KW-1133">Transmembrane helix</keyword>
<keyword id="KW-0813">Transport</keyword>
<feature type="chain" id="PRO_0000388583" description="Golgi to ER traffic protein 1">
    <location>
        <begin position="1"/>
        <end position="199"/>
    </location>
</feature>
<feature type="topological domain" description="Lumenal" evidence="1">
    <location>
        <begin position="1"/>
        <end position="11"/>
    </location>
</feature>
<feature type="transmembrane region" description="Helical" evidence="1">
    <location>
        <begin position="12"/>
        <end position="31"/>
    </location>
</feature>
<feature type="topological domain" description="Cytoplasmic" evidence="1">
    <location>
        <begin position="32"/>
        <end position="115"/>
    </location>
</feature>
<feature type="transmembrane region" description="Helical" evidence="1">
    <location>
        <begin position="116"/>
        <end position="136"/>
    </location>
</feature>
<feature type="topological domain" description="Lumenal" evidence="1">
    <location>
        <begin position="137"/>
        <end position="160"/>
    </location>
</feature>
<feature type="transmembrane region" description="Helical" evidence="1">
    <location>
        <begin position="161"/>
        <end position="177"/>
    </location>
</feature>
<feature type="topological domain" description="Cytoplasmic" evidence="1">
    <location>
        <begin position="178"/>
        <end position="199"/>
    </location>
</feature>
<feature type="coiled-coil region" evidence="1">
    <location>
        <begin position="76"/>
        <end position="116"/>
    </location>
</feature>
<protein>
    <recommendedName>
        <fullName evidence="1">Golgi to ER traffic protein 1</fullName>
    </recommendedName>
    <alternativeName>
        <fullName evidence="1">Guided entry of tail-anchored proteins 1</fullName>
    </alternativeName>
</protein>
<proteinExistence type="inferred from homology"/>